<proteinExistence type="inferred from homology"/>
<name>GCSPA_BACHK</name>
<comment type="function">
    <text evidence="1">The glycine cleavage system catalyzes the degradation of glycine. The P protein binds the alpha-amino group of glycine through its pyridoxal phosphate cofactor; CO(2) is released and the remaining methylamine moiety is then transferred to the lipoamide cofactor of the H protein.</text>
</comment>
<comment type="catalytic activity">
    <reaction evidence="1">
        <text>N(6)-[(R)-lipoyl]-L-lysyl-[glycine-cleavage complex H protein] + glycine + H(+) = N(6)-[(R)-S(8)-aminomethyldihydrolipoyl]-L-lysyl-[glycine-cleavage complex H protein] + CO2</text>
        <dbReference type="Rhea" id="RHEA:24304"/>
        <dbReference type="Rhea" id="RHEA-COMP:10494"/>
        <dbReference type="Rhea" id="RHEA-COMP:10495"/>
        <dbReference type="ChEBI" id="CHEBI:15378"/>
        <dbReference type="ChEBI" id="CHEBI:16526"/>
        <dbReference type="ChEBI" id="CHEBI:57305"/>
        <dbReference type="ChEBI" id="CHEBI:83099"/>
        <dbReference type="ChEBI" id="CHEBI:83143"/>
        <dbReference type="EC" id="1.4.4.2"/>
    </reaction>
</comment>
<comment type="subunit">
    <text evidence="1">The glycine cleavage system is composed of four proteins: P, T, L and H. In this organism, the P 'protein' is a heterodimer of two subunits.</text>
</comment>
<comment type="similarity">
    <text evidence="1">Belongs to the GcvP family. N-terminal subunit subfamily.</text>
</comment>
<dbReference type="EC" id="1.4.4.2" evidence="1"/>
<dbReference type="EMBL" id="AE017355">
    <property type="protein sequence ID" value="AAT60789.1"/>
    <property type="molecule type" value="Genomic_DNA"/>
</dbReference>
<dbReference type="RefSeq" id="WP_000903221.1">
    <property type="nucleotide sequence ID" value="NC_005957.1"/>
</dbReference>
<dbReference type="RefSeq" id="YP_038289.1">
    <property type="nucleotide sequence ID" value="NC_005957.1"/>
</dbReference>
<dbReference type="SMR" id="Q6HDT7"/>
<dbReference type="KEGG" id="btk:BT9727_3970"/>
<dbReference type="PATRIC" id="fig|281309.8.peg.4233"/>
<dbReference type="HOGENOM" id="CLU_004620_0_2_9"/>
<dbReference type="Proteomes" id="UP000001301">
    <property type="component" value="Chromosome"/>
</dbReference>
<dbReference type="GO" id="GO:0004375">
    <property type="term" value="F:glycine dehydrogenase (decarboxylating) activity"/>
    <property type="evidence" value="ECO:0007669"/>
    <property type="project" value="UniProtKB-EC"/>
</dbReference>
<dbReference type="GO" id="GO:0019464">
    <property type="term" value="P:glycine decarboxylation via glycine cleavage system"/>
    <property type="evidence" value="ECO:0007669"/>
    <property type="project" value="UniProtKB-UniRule"/>
</dbReference>
<dbReference type="GO" id="GO:0009116">
    <property type="term" value="P:nucleoside metabolic process"/>
    <property type="evidence" value="ECO:0007669"/>
    <property type="project" value="InterPro"/>
</dbReference>
<dbReference type="CDD" id="cd00613">
    <property type="entry name" value="GDC-P"/>
    <property type="match status" value="1"/>
</dbReference>
<dbReference type="FunFam" id="3.40.640.10:FF:000113">
    <property type="entry name" value="Probable glycine dehydrogenase (decarboxylating) subunit 1"/>
    <property type="match status" value="1"/>
</dbReference>
<dbReference type="Gene3D" id="3.90.1150.10">
    <property type="entry name" value="Aspartate Aminotransferase, domain 1"/>
    <property type="match status" value="1"/>
</dbReference>
<dbReference type="Gene3D" id="3.40.640.10">
    <property type="entry name" value="Type I PLP-dependent aspartate aminotransferase-like (Major domain)"/>
    <property type="match status" value="1"/>
</dbReference>
<dbReference type="HAMAP" id="MF_00712">
    <property type="entry name" value="GcvPA"/>
    <property type="match status" value="1"/>
</dbReference>
<dbReference type="InterPro" id="IPR023010">
    <property type="entry name" value="GcvPA"/>
</dbReference>
<dbReference type="InterPro" id="IPR049315">
    <property type="entry name" value="GDC-P_N"/>
</dbReference>
<dbReference type="InterPro" id="IPR020581">
    <property type="entry name" value="GDC_P"/>
</dbReference>
<dbReference type="InterPro" id="IPR015424">
    <property type="entry name" value="PyrdxlP-dep_Trfase"/>
</dbReference>
<dbReference type="InterPro" id="IPR015421">
    <property type="entry name" value="PyrdxlP-dep_Trfase_major"/>
</dbReference>
<dbReference type="InterPro" id="IPR015422">
    <property type="entry name" value="PyrdxlP-dep_Trfase_small"/>
</dbReference>
<dbReference type="NCBIfam" id="NF001696">
    <property type="entry name" value="PRK00451.1"/>
    <property type="match status" value="1"/>
</dbReference>
<dbReference type="PANTHER" id="PTHR42806">
    <property type="entry name" value="GLYCINE CLEAVAGE SYSTEM P-PROTEIN"/>
    <property type="match status" value="1"/>
</dbReference>
<dbReference type="PANTHER" id="PTHR42806:SF1">
    <property type="entry name" value="GLYCINE DEHYDROGENASE (DECARBOXYLATING)"/>
    <property type="match status" value="1"/>
</dbReference>
<dbReference type="Pfam" id="PF02347">
    <property type="entry name" value="GDC-P"/>
    <property type="match status" value="1"/>
</dbReference>
<dbReference type="PIRSF" id="PIRSF006815">
    <property type="entry name" value="GcvPA"/>
    <property type="match status" value="1"/>
</dbReference>
<dbReference type="SUPFAM" id="SSF53383">
    <property type="entry name" value="PLP-dependent transferases"/>
    <property type="match status" value="1"/>
</dbReference>
<reference key="1">
    <citation type="journal article" date="2006" name="J. Bacteriol.">
        <title>Pathogenomic sequence analysis of Bacillus cereus and Bacillus thuringiensis isolates closely related to Bacillus anthracis.</title>
        <authorList>
            <person name="Han C.S."/>
            <person name="Xie G."/>
            <person name="Challacombe J.F."/>
            <person name="Altherr M.R."/>
            <person name="Bhotika S.S."/>
            <person name="Bruce D."/>
            <person name="Campbell C.S."/>
            <person name="Campbell M.L."/>
            <person name="Chen J."/>
            <person name="Chertkov O."/>
            <person name="Cleland C."/>
            <person name="Dimitrijevic M."/>
            <person name="Doggett N.A."/>
            <person name="Fawcett J.J."/>
            <person name="Glavina T."/>
            <person name="Goodwin L.A."/>
            <person name="Hill K.K."/>
            <person name="Hitchcock P."/>
            <person name="Jackson P.J."/>
            <person name="Keim P."/>
            <person name="Kewalramani A.R."/>
            <person name="Longmire J."/>
            <person name="Lucas S."/>
            <person name="Malfatti S."/>
            <person name="McMurry K."/>
            <person name="Meincke L.J."/>
            <person name="Misra M."/>
            <person name="Moseman B.L."/>
            <person name="Mundt M."/>
            <person name="Munk A.C."/>
            <person name="Okinaka R.T."/>
            <person name="Parson-Quintana B."/>
            <person name="Reilly L.P."/>
            <person name="Richardson P."/>
            <person name="Robinson D.L."/>
            <person name="Rubin E."/>
            <person name="Saunders E."/>
            <person name="Tapia R."/>
            <person name="Tesmer J.G."/>
            <person name="Thayer N."/>
            <person name="Thompson L.S."/>
            <person name="Tice H."/>
            <person name="Ticknor L.O."/>
            <person name="Wills P.L."/>
            <person name="Brettin T.S."/>
            <person name="Gilna P."/>
        </authorList>
    </citation>
    <scope>NUCLEOTIDE SEQUENCE [LARGE SCALE GENOMIC DNA]</scope>
    <source>
        <strain>97-27</strain>
    </source>
</reference>
<evidence type="ECO:0000255" key="1">
    <source>
        <dbReference type="HAMAP-Rule" id="MF_00712"/>
    </source>
</evidence>
<gene>
    <name evidence="1" type="primary">gcvPA</name>
    <name type="ordered locus">BT9727_3970</name>
</gene>
<protein>
    <recommendedName>
        <fullName evidence="1">Probable glycine dehydrogenase (decarboxylating) subunit 1</fullName>
        <ecNumber evidence="1">1.4.4.2</ecNumber>
    </recommendedName>
    <alternativeName>
        <fullName evidence="1">Glycine cleavage system P-protein subunit 1</fullName>
    </alternativeName>
    <alternativeName>
        <fullName evidence="1">Glycine decarboxylase subunit 1</fullName>
    </alternativeName>
    <alternativeName>
        <fullName evidence="1">Glycine dehydrogenase (aminomethyl-transferring) subunit 1</fullName>
    </alternativeName>
</protein>
<keyword id="KW-0560">Oxidoreductase</keyword>
<sequence length="447" mass="49403">MLHRYLPMTEEDKKEMLQTIGVQTIDELFSDIPESVRFKGDLKIKEAKSEPELLKELSQIASKNANLKEYASFLGAGVYDHYAPVIVDHVISRSEFYTAYTPYQPEISQGELQAIFEFQTMICELTGMDVANSSMYDGGTALAEAAMLAAGHTRKKKILVSSAVHPESRAVLETYAKGQHLEVVEINHKDGVTDLDVLQSEVDDTVACVIVQYPNFFGQVEKLADIEKIVHQQKSLFIVSSNPLSLGALTPPGKFGADIVIGDAQPFGIPTQFGGPHCGYFATTKAFMRKIPGRLVGQTVDSDGKRGFVLTLQAREQHIRRDKATSNICSNQALNALAASVAMTALGKQGVKEMARQNISKAQYAKRQFEAKGFTVTFAGPFFNEFVVDCKRPVKEVNDALLQKNIIGGYDLGRDYKEHENHMLVAVTELRTKEEIDTLVNEMGAIQ</sequence>
<feature type="chain" id="PRO_0000166959" description="Probable glycine dehydrogenase (decarboxylating) subunit 1">
    <location>
        <begin position="1"/>
        <end position="447"/>
    </location>
</feature>
<accession>Q6HDT7</accession>
<organism>
    <name type="scientific">Bacillus thuringiensis subsp. konkukian (strain 97-27)</name>
    <dbReference type="NCBI Taxonomy" id="281309"/>
    <lineage>
        <taxon>Bacteria</taxon>
        <taxon>Bacillati</taxon>
        <taxon>Bacillota</taxon>
        <taxon>Bacilli</taxon>
        <taxon>Bacillales</taxon>
        <taxon>Bacillaceae</taxon>
        <taxon>Bacillus</taxon>
        <taxon>Bacillus cereus group</taxon>
    </lineage>
</organism>